<name>PAOX_MOUSE</name>
<proteinExistence type="evidence at protein level"/>
<accession>Q8C0L6</accession>
<accession>Q8K254</accession>
<gene>
    <name type="primary">Paox</name>
    <name type="synonym">Pao</name>
</gene>
<reference key="1">
    <citation type="journal article" date="2003" name="J. Biol. Chem.">
        <title>Cloning, sequencing, and heterologous expression of the murine peroxisomal flavoprotein, N(1)-acetylated polyamine oxidase.</title>
        <authorList>
            <person name="Wu T."/>
            <person name="Yankovskaya V."/>
            <person name="McIntire W.S."/>
        </authorList>
    </citation>
    <scope>NUCLEOTIDE SEQUENCE [MRNA] (ISOFORM 1)</scope>
    <scope>FUNCTION</scope>
    <scope>CATALYTIC ACTIVITY</scope>
    <scope>PATHWAY</scope>
    <scope>TISSUE SPECIFICITY</scope>
    <scope>COFACTOR</scope>
    <scope>BIOPHYSICOCHEMICAL PROPERTIES</scope>
</reference>
<reference key="2">
    <citation type="journal article" date="2005" name="Science">
        <title>The transcriptional landscape of the mammalian genome.</title>
        <authorList>
            <person name="Carninci P."/>
            <person name="Kasukawa T."/>
            <person name="Katayama S."/>
            <person name="Gough J."/>
            <person name="Frith M.C."/>
            <person name="Maeda N."/>
            <person name="Oyama R."/>
            <person name="Ravasi T."/>
            <person name="Lenhard B."/>
            <person name="Wells C."/>
            <person name="Kodzius R."/>
            <person name="Shimokawa K."/>
            <person name="Bajic V.B."/>
            <person name="Brenner S.E."/>
            <person name="Batalov S."/>
            <person name="Forrest A.R."/>
            <person name="Zavolan M."/>
            <person name="Davis M.J."/>
            <person name="Wilming L.G."/>
            <person name="Aidinis V."/>
            <person name="Allen J.E."/>
            <person name="Ambesi-Impiombato A."/>
            <person name="Apweiler R."/>
            <person name="Aturaliya R.N."/>
            <person name="Bailey T.L."/>
            <person name="Bansal M."/>
            <person name="Baxter L."/>
            <person name="Beisel K.W."/>
            <person name="Bersano T."/>
            <person name="Bono H."/>
            <person name="Chalk A.M."/>
            <person name="Chiu K.P."/>
            <person name="Choudhary V."/>
            <person name="Christoffels A."/>
            <person name="Clutterbuck D.R."/>
            <person name="Crowe M.L."/>
            <person name="Dalla E."/>
            <person name="Dalrymple B.P."/>
            <person name="de Bono B."/>
            <person name="Della Gatta G."/>
            <person name="di Bernardo D."/>
            <person name="Down T."/>
            <person name="Engstrom P."/>
            <person name="Fagiolini M."/>
            <person name="Faulkner G."/>
            <person name="Fletcher C.F."/>
            <person name="Fukushima T."/>
            <person name="Furuno M."/>
            <person name="Futaki S."/>
            <person name="Gariboldi M."/>
            <person name="Georgii-Hemming P."/>
            <person name="Gingeras T.R."/>
            <person name="Gojobori T."/>
            <person name="Green R.E."/>
            <person name="Gustincich S."/>
            <person name="Harbers M."/>
            <person name="Hayashi Y."/>
            <person name="Hensch T.K."/>
            <person name="Hirokawa N."/>
            <person name="Hill D."/>
            <person name="Huminiecki L."/>
            <person name="Iacono M."/>
            <person name="Ikeo K."/>
            <person name="Iwama A."/>
            <person name="Ishikawa T."/>
            <person name="Jakt M."/>
            <person name="Kanapin A."/>
            <person name="Katoh M."/>
            <person name="Kawasawa Y."/>
            <person name="Kelso J."/>
            <person name="Kitamura H."/>
            <person name="Kitano H."/>
            <person name="Kollias G."/>
            <person name="Krishnan S.P."/>
            <person name="Kruger A."/>
            <person name="Kummerfeld S.K."/>
            <person name="Kurochkin I.V."/>
            <person name="Lareau L.F."/>
            <person name="Lazarevic D."/>
            <person name="Lipovich L."/>
            <person name="Liu J."/>
            <person name="Liuni S."/>
            <person name="McWilliam S."/>
            <person name="Madan Babu M."/>
            <person name="Madera M."/>
            <person name="Marchionni L."/>
            <person name="Matsuda H."/>
            <person name="Matsuzawa S."/>
            <person name="Miki H."/>
            <person name="Mignone F."/>
            <person name="Miyake S."/>
            <person name="Morris K."/>
            <person name="Mottagui-Tabar S."/>
            <person name="Mulder N."/>
            <person name="Nakano N."/>
            <person name="Nakauchi H."/>
            <person name="Ng P."/>
            <person name="Nilsson R."/>
            <person name="Nishiguchi S."/>
            <person name="Nishikawa S."/>
            <person name="Nori F."/>
            <person name="Ohara O."/>
            <person name="Okazaki Y."/>
            <person name="Orlando V."/>
            <person name="Pang K.C."/>
            <person name="Pavan W.J."/>
            <person name="Pavesi G."/>
            <person name="Pesole G."/>
            <person name="Petrovsky N."/>
            <person name="Piazza S."/>
            <person name="Reed J."/>
            <person name="Reid J.F."/>
            <person name="Ring B.Z."/>
            <person name="Ringwald M."/>
            <person name="Rost B."/>
            <person name="Ruan Y."/>
            <person name="Salzberg S.L."/>
            <person name="Sandelin A."/>
            <person name="Schneider C."/>
            <person name="Schoenbach C."/>
            <person name="Sekiguchi K."/>
            <person name="Semple C.A."/>
            <person name="Seno S."/>
            <person name="Sessa L."/>
            <person name="Sheng Y."/>
            <person name="Shibata Y."/>
            <person name="Shimada H."/>
            <person name="Shimada K."/>
            <person name="Silva D."/>
            <person name="Sinclair B."/>
            <person name="Sperling S."/>
            <person name="Stupka E."/>
            <person name="Sugiura K."/>
            <person name="Sultana R."/>
            <person name="Takenaka Y."/>
            <person name="Taki K."/>
            <person name="Tammoja K."/>
            <person name="Tan S.L."/>
            <person name="Tang S."/>
            <person name="Taylor M.S."/>
            <person name="Tegner J."/>
            <person name="Teichmann S.A."/>
            <person name="Ueda H.R."/>
            <person name="van Nimwegen E."/>
            <person name="Verardo R."/>
            <person name="Wei C.L."/>
            <person name="Yagi K."/>
            <person name="Yamanishi H."/>
            <person name="Zabarovsky E."/>
            <person name="Zhu S."/>
            <person name="Zimmer A."/>
            <person name="Hide W."/>
            <person name="Bult C."/>
            <person name="Grimmond S.M."/>
            <person name="Teasdale R.D."/>
            <person name="Liu E.T."/>
            <person name="Brusic V."/>
            <person name="Quackenbush J."/>
            <person name="Wahlestedt C."/>
            <person name="Mattick J.S."/>
            <person name="Hume D.A."/>
            <person name="Kai C."/>
            <person name="Sasaki D."/>
            <person name="Tomaru Y."/>
            <person name="Fukuda S."/>
            <person name="Kanamori-Katayama M."/>
            <person name="Suzuki M."/>
            <person name="Aoki J."/>
            <person name="Arakawa T."/>
            <person name="Iida J."/>
            <person name="Imamura K."/>
            <person name="Itoh M."/>
            <person name="Kato T."/>
            <person name="Kawaji H."/>
            <person name="Kawagashira N."/>
            <person name="Kawashima T."/>
            <person name="Kojima M."/>
            <person name="Kondo S."/>
            <person name="Konno H."/>
            <person name="Nakano K."/>
            <person name="Ninomiya N."/>
            <person name="Nishio T."/>
            <person name="Okada M."/>
            <person name="Plessy C."/>
            <person name="Shibata K."/>
            <person name="Shiraki T."/>
            <person name="Suzuki S."/>
            <person name="Tagami M."/>
            <person name="Waki K."/>
            <person name="Watahiki A."/>
            <person name="Okamura-Oho Y."/>
            <person name="Suzuki H."/>
            <person name="Kawai J."/>
            <person name="Hayashizaki Y."/>
        </authorList>
    </citation>
    <scope>NUCLEOTIDE SEQUENCE [LARGE SCALE MRNA] (ISOFORM 1)</scope>
    <source>
        <strain>C57BL/6J</strain>
        <tissue>Head</tissue>
    </source>
</reference>
<reference key="3">
    <citation type="journal article" date="2004" name="Genome Res.">
        <title>The status, quality, and expansion of the NIH full-length cDNA project: the Mammalian Gene Collection (MGC).</title>
        <authorList>
            <consortium name="The MGC Project Team"/>
        </authorList>
    </citation>
    <scope>NUCLEOTIDE SEQUENCE [LARGE SCALE MRNA] (ISOFORMS 1 AND 2)</scope>
    <source>
        <strain>FVB/N</strain>
        <tissue>Colon</tissue>
        <tissue>Mammary gland</tissue>
    </source>
</reference>
<reference key="4">
    <citation type="journal article" date="2010" name="Cell">
        <title>A tissue-specific atlas of mouse protein phosphorylation and expression.</title>
        <authorList>
            <person name="Huttlin E.L."/>
            <person name="Jedrychowski M.P."/>
            <person name="Elias J.E."/>
            <person name="Goswami T."/>
            <person name="Rad R."/>
            <person name="Beausoleil S.A."/>
            <person name="Villen J."/>
            <person name="Haas W."/>
            <person name="Sowa M.E."/>
            <person name="Gygi S.P."/>
        </authorList>
    </citation>
    <scope>IDENTIFICATION BY MASS SPECTROMETRY [LARGE SCALE ANALYSIS]</scope>
    <source>
        <tissue>Brain</tissue>
        <tissue>Brown adipose tissue</tissue>
        <tissue>Kidney</tissue>
        <tissue>Lung</tissue>
        <tissue>Pancreas</tissue>
        <tissue>Spleen</tissue>
        <tissue>Testis</tissue>
    </source>
</reference>
<reference evidence="7 8 9 10" key="5">
    <citation type="journal article" date="2017" name="Biochemistry">
        <title>The Structure of Murine N1-Acetylspermine Oxidase Reveals Molecular Details of Vertebrate Polyamine Catabolism.</title>
        <authorList>
            <person name="Sjogren T."/>
            <person name="Wassvik C.M."/>
            <person name="Snijder A."/>
            <person name="Aagaard A."/>
            <person name="Kumanomidou T."/>
            <person name="Barlind L."/>
            <person name="Kaminski T.P."/>
            <person name="Kashima A."/>
            <person name="Yokota T."/>
            <person name="Fjellstrom O."/>
        </authorList>
    </citation>
    <scope>X-RAY CRYSTALLOGRAPHY (1.40 ANGSTROMS) OF 4-504 IN COMPLEXES WITH FAD; N(1)-ACETYLSPERMINE AND SYNTHETIC INHIBITOR</scope>
    <scope>FUNCTION</scope>
    <scope>CATALYTIC ACTIVITY</scope>
    <scope>COFACTOR</scope>
    <scope>MUTAGENESIS OF ASN-313</scope>
    <scope>PATHWAY</scope>
</reference>
<protein>
    <recommendedName>
        <fullName>Peroxisomal N(1)-acetyl-spermine/spermidine oxidase</fullName>
        <ecNumber evidence="3 4">1.5.3.13</ecNumber>
    </recommendedName>
    <alternativeName>
        <fullName>Polyamine oxidase</fullName>
    </alternativeName>
</protein>
<comment type="function">
    <text evidence="3 4">Flavoenzyme which catalyzes the oxidation of N(1)-acetylspermine to spermidine and is thus involved in the polyamine back-conversion (PubMed:12660232, PubMed:28029774). Can also oxidize N(1)-acetylspermidine to putrescine. Substrate specificity: N(1)-acetylspermine = N(1)-acetylspermidine &gt; N(1),N(12)-diacylspermine &gt;&gt; spermine. Does not oxidize spermidine. Plays an important role in the regulation of polyamine intracellular concentration and has the potential to act as a determinant of cellular sensitivity to the antitumor polyamine analogs (PubMed:12660232).</text>
</comment>
<comment type="catalytic activity">
    <reaction evidence="3 4">
        <text>N(1)-acetylspermine + O2 + H2O = 3-acetamidopropanal + spermidine + H2O2</text>
        <dbReference type="Rhea" id="RHEA:25800"/>
        <dbReference type="ChEBI" id="CHEBI:15377"/>
        <dbReference type="ChEBI" id="CHEBI:15379"/>
        <dbReference type="ChEBI" id="CHEBI:16240"/>
        <dbReference type="ChEBI" id="CHEBI:30322"/>
        <dbReference type="ChEBI" id="CHEBI:57834"/>
        <dbReference type="ChEBI" id="CHEBI:58101"/>
        <dbReference type="EC" id="1.5.3.13"/>
    </reaction>
</comment>
<comment type="catalytic activity">
    <reaction evidence="3">
        <text>N(1)-acetylspermidine + O2 + H2O = 3-acetamidopropanal + putrescine + H2O2</text>
        <dbReference type="Rhea" id="RHEA:25812"/>
        <dbReference type="ChEBI" id="CHEBI:15377"/>
        <dbReference type="ChEBI" id="CHEBI:15379"/>
        <dbReference type="ChEBI" id="CHEBI:16240"/>
        <dbReference type="ChEBI" id="CHEBI:30322"/>
        <dbReference type="ChEBI" id="CHEBI:58324"/>
        <dbReference type="ChEBI" id="CHEBI:326268"/>
        <dbReference type="EC" id="1.5.3.13"/>
    </reaction>
</comment>
<comment type="catalytic activity">
    <reaction evidence="3">
        <text>N(1),N(12)-diacetylspermine + O2 + H2O = 3-acetamidopropanal + N(1)-acetylspermidine + H2O2</text>
        <dbReference type="Rhea" id="RHEA:25868"/>
        <dbReference type="ChEBI" id="CHEBI:15377"/>
        <dbReference type="ChEBI" id="CHEBI:15379"/>
        <dbReference type="ChEBI" id="CHEBI:16240"/>
        <dbReference type="ChEBI" id="CHEBI:30322"/>
        <dbReference type="ChEBI" id="CHEBI:58324"/>
        <dbReference type="ChEBI" id="CHEBI:58550"/>
        <dbReference type="EC" id="1.5.3.13"/>
    </reaction>
</comment>
<comment type="cofactor">
    <cofactor evidence="3 4">
        <name>FAD</name>
        <dbReference type="ChEBI" id="CHEBI:57692"/>
    </cofactor>
    <text evidence="3 4">Binds 1 FAD per subunit.</text>
</comment>
<comment type="biophysicochemical properties">
    <kinetics>
        <KM evidence="3">1.78 uM for N(1)-acetylspermine</KM>
        <KM evidence="3">36.8 uM for N(1)-acetylspermidine</KM>
        <KM evidence="3">716 uM for spermine</KM>
        <KM evidence="3">150 uM for N(1),N(12)-diacetylspermine</KM>
    </kinetics>
</comment>
<comment type="pathway">
    <text evidence="3 4">Amine and polyamine metabolism; spermine metabolism.</text>
</comment>
<comment type="subunit">
    <text>Monomer.</text>
</comment>
<comment type="subcellular location">
    <subcellularLocation>
        <location evidence="1">Peroxisome</location>
    </subcellularLocation>
    <subcellularLocation>
        <location evidence="1">Cytoplasm</location>
    </subcellularLocation>
</comment>
<comment type="alternative products">
    <event type="alternative splicing"/>
    <isoform>
        <id>Q8C0L6-1</id>
        <name>1</name>
        <sequence type="displayed"/>
    </isoform>
    <isoform>
        <id>Q8C0L6-2</id>
        <name>2</name>
        <sequence type="described" ref="VSP_011263 VSP_011264"/>
    </isoform>
</comment>
<comment type="tissue specificity">
    <text evidence="3">Widely expressed at different developmental stages. Expressed at high level in the liver and the stomach, expressed at lower level in heart, spleen, thymus, small intestine, muscle, pancreas, uterus, and breast and expressed at very low level in brain, kidney, lung, testis, skin, adrenal gland and prostate gland.</text>
</comment>
<comment type="developmental stage">
    <text>Expression increased during embryonic development: there is a gradual increase in the tissues on going from 8.5 to 19 day embryos. In the breast, expression is very low in virgin mouse and quite high in pregnant mouse, but decreases in lactating and involuting breasts.</text>
</comment>
<comment type="induction">
    <text>By polyamine analogs.</text>
</comment>
<comment type="miscellaneous">
    <text evidence="1">Oxidizes N(1)-acetylated polyamines on the exo-side of their N(4)-amino groups. Plant PAO oxidizes spermine on the endo-side of the N(4)-nitrogen (By similarity).</text>
</comment>
<comment type="miscellaneous">
    <text>N-ethylated polyamines are also good substrates for this enzyme: they have been used for cancer clinical trials. They down-regulate polyamine biosynthetic enzymes, but dramatically up-regulate SSAT synthesis, which results in mammalian cells becoming apoptotic.</text>
</comment>
<comment type="similarity">
    <text evidence="6">Belongs to the flavin monoamine oxidase family.</text>
</comment>
<feature type="chain" id="PRO_0000099876" description="Peroxisomal N(1)-acetyl-spermine/spermidine oxidase">
    <location>
        <begin position="1"/>
        <end position="504"/>
    </location>
</feature>
<feature type="short sequence motif" description="Microbody targeting signal" evidence="2">
    <location>
        <begin position="502"/>
        <end position="504"/>
    </location>
</feature>
<feature type="binding site" evidence="4 7 8 10">
    <location>
        <position position="16"/>
    </location>
    <ligand>
        <name>FAD</name>
        <dbReference type="ChEBI" id="CHEBI:57692"/>
    </ligand>
</feature>
<feature type="binding site" evidence="4 7 8 10">
    <location>
        <position position="37"/>
    </location>
    <ligand>
        <name>FAD</name>
        <dbReference type="ChEBI" id="CHEBI:57692"/>
    </ligand>
</feature>
<feature type="binding site" evidence="4 7 8 10">
    <location>
        <position position="45"/>
    </location>
    <ligand>
        <name>FAD</name>
        <dbReference type="ChEBI" id="CHEBI:57692"/>
    </ligand>
</feature>
<feature type="binding site" evidence="4 7 8 10">
    <location>
        <begin position="61"/>
        <end position="62"/>
    </location>
    <ligand>
        <name>FAD</name>
        <dbReference type="ChEBI" id="CHEBI:57692"/>
    </ligand>
</feature>
<feature type="binding site" evidence="4 10">
    <location>
        <position position="64"/>
    </location>
    <ligand>
        <name>substrate</name>
    </ligand>
</feature>
<feature type="binding site" evidence="4 8 10">
    <location>
        <position position="187"/>
    </location>
    <ligand>
        <name>substrate</name>
    </ligand>
</feature>
<feature type="binding site" evidence="4 7 8 10">
    <location>
        <position position="240"/>
    </location>
    <ligand>
        <name>FAD</name>
        <dbReference type="ChEBI" id="CHEBI:57692"/>
    </ligand>
</feature>
<feature type="binding site" evidence="4 8 10">
    <location>
        <position position="313"/>
    </location>
    <ligand>
        <name>substrate</name>
    </ligand>
</feature>
<feature type="binding site" evidence="4 7 8 10">
    <location>
        <position position="465"/>
    </location>
    <ligand>
        <name>FAD</name>
        <dbReference type="ChEBI" id="CHEBI:57692"/>
    </ligand>
</feature>
<feature type="binding site" evidence="4 7 8 10">
    <location>
        <begin position="474"/>
        <end position="475"/>
    </location>
    <ligand>
        <name>FAD</name>
        <dbReference type="ChEBI" id="CHEBI:57692"/>
    </ligand>
</feature>
<feature type="splice variant" id="VSP_011263" description="In isoform 2." evidence="5">
    <location>
        <begin position="1"/>
        <end position="280"/>
    </location>
</feature>
<feature type="splice variant" id="VSP_011264" description="In isoform 2." evidence="5">
    <original>PL</original>
    <variation>ME</variation>
    <location>
        <begin position="281"/>
        <end position="282"/>
    </location>
</feature>
<feature type="mutagenesis site" description="Decreased enzyme activity with N(1)-acetylspermine." evidence="4">
    <original>N</original>
    <variation>A</variation>
    <variation>D</variation>
    <variation>L</variation>
    <variation>T</variation>
    <location>
        <position position="313"/>
    </location>
</feature>
<feature type="strand" evidence="13">
    <location>
        <begin position="7"/>
        <end position="11"/>
    </location>
</feature>
<feature type="helix" evidence="13">
    <location>
        <begin position="15"/>
        <end position="25"/>
    </location>
</feature>
<feature type="strand" evidence="11">
    <location>
        <begin position="27"/>
        <end position="29"/>
    </location>
</feature>
<feature type="strand" evidence="13">
    <location>
        <begin position="32"/>
        <end position="36"/>
    </location>
</feature>
<feature type="strand" evidence="13">
    <location>
        <begin position="38"/>
        <end position="43"/>
    </location>
</feature>
<feature type="strand" evidence="13">
    <location>
        <begin position="48"/>
        <end position="51"/>
    </location>
</feature>
<feature type="strand" evidence="13">
    <location>
        <begin position="54"/>
        <end position="59"/>
    </location>
</feature>
<feature type="strand" evidence="13">
    <location>
        <begin position="63"/>
        <end position="65"/>
    </location>
</feature>
<feature type="helix" evidence="13">
    <location>
        <begin position="71"/>
        <end position="78"/>
    </location>
</feature>
<feature type="helix" evidence="13">
    <location>
        <begin position="84"/>
        <end position="87"/>
    </location>
</feature>
<feature type="helix" evidence="13">
    <location>
        <begin position="89"/>
        <end position="93"/>
    </location>
</feature>
<feature type="strand" evidence="13">
    <location>
        <begin position="105"/>
        <end position="108"/>
    </location>
</feature>
<feature type="strand" evidence="12">
    <location>
        <begin position="111"/>
        <end position="113"/>
    </location>
</feature>
<feature type="helix" evidence="13">
    <location>
        <begin position="116"/>
        <end position="132"/>
    </location>
</feature>
<feature type="helix" evidence="13">
    <location>
        <begin position="133"/>
        <end position="136"/>
    </location>
</feature>
<feature type="strand" evidence="13">
    <location>
        <begin position="143"/>
        <end position="146"/>
    </location>
</feature>
<feature type="helix" evidence="13">
    <location>
        <begin position="147"/>
        <end position="159"/>
    </location>
</feature>
<feature type="helix" evidence="13">
    <location>
        <begin position="170"/>
        <end position="188"/>
    </location>
</feature>
<feature type="helix" evidence="13">
    <location>
        <begin position="193"/>
        <end position="195"/>
    </location>
</feature>
<feature type="turn" evidence="13">
    <location>
        <begin position="198"/>
        <end position="200"/>
    </location>
</feature>
<feature type="helix" evidence="13">
    <location>
        <begin position="201"/>
        <end position="203"/>
    </location>
</feature>
<feature type="helix" evidence="13">
    <location>
        <begin position="219"/>
        <end position="228"/>
    </location>
</feature>
<feature type="strand" evidence="13">
    <location>
        <begin position="234"/>
        <end position="237"/>
    </location>
</feature>
<feature type="strand" evidence="13">
    <location>
        <begin position="240"/>
        <end position="244"/>
    </location>
</feature>
<feature type="strand" evidence="13">
    <location>
        <begin position="252"/>
        <end position="255"/>
    </location>
</feature>
<feature type="strand" evidence="13">
    <location>
        <begin position="258"/>
        <end position="265"/>
    </location>
</feature>
<feature type="strand" evidence="13">
    <location>
        <begin position="270"/>
        <end position="278"/>
    </location>
</feature>
<feature type="helix" evidence="13">
    <location>
        <begin position="282"/>
        <end position="292"/>
    </location>
</feature>
<feature type="strand" evidence="13">
    <location>
        <begin position="293"/>
        <end position="295"/>
    </location>
</feature>
<feature type="helix" evidence="13">
    <location>
        <begin position="299"/>
        <end position="307"/>
    </location>
</feature>
<feature type="strand" evidence="13">
    <location>
        <begin position="308"/>
        <end position="311"/>
    </location>
</feature>
<feature type="strand" evidence="13">
    <location>
        <begin position="313"/>
        <end position="322"/>
    </location>
</feature>
<feature type="strand" evidence="13">
    <location>
        <begin position="331"/>
        <end position="335"/>
    </location>
</feature>
<feature type="turn" evidence="13">
    <location>
        <begin position="341"/>
        <end position="343"/>
    </location>
</feature>
<feature type="helix" evidence="13">
    <location>
        <begin position="353"/>
        <end position="356"/>
    </location>
</feature>
<feature type="strand" evidence="13">
    <location>
        <begin position="359"/>
        <end position="362"/>
    </location>
</feature>
<feature type="strand" evidence="13">
    <location>
        <begin position="370"/>
        <end position="378"/>
    </location>
</feature>
<feature type="helix" evidence="13">
    <location>
        <begin position="379"/>
        <end position="386"/>
    </location>
</feature>
<feature type="helix" evidence="13">
    <location>
        <begin position="389"/>
        <end position="403"/>
    </location>
</feature>
<feature type="strand" evidence="13">
    <location>
        <begin position="413"/>
        <end position="417"/>
    </location>
</feature>
<feature type="turn" evidence="13">
    <location>
        <begin position="420"/>
        <end position="422"/>
    </location>
</feature>
<feature type="turn" evidence="13">
    <location>
        <begin position="424"/>
        <end position="426"/>
    </location>
</feature>
<feature type="strand" evidence="13">
    <location>
        <begin position="427"/>
        <end position="432"/>
    </location>
</feature>
<feature type="helix" evidence="13">
    <location>
        <begin position="439"/>
        <end position="446"/>
    </location>
</feature>
<feature type="strand" evidence="13">
    <location>
        <begin position="459"/>
        <end position="462"/>
    </location>
</feature>
<feature type="helix" evidence="13">
    <location>
        <begin position="465"/>
        <end position="467"/>
    </location>
</feature>
<feature type="turn" evidence="13">
    <location>
        <begin position="469"/>
        <end position="473"/>
    </location>
</feature>
<feature type="helix" evidence="13">
    <location>
        <begin position="475"/>
        <end position="495"/>
    </location>
</feature>
<feature type="helix" evidence="13">
    <location>
        <begin position="496"/>
        <end position="500"/>
    </location>
</feature>
<keyword id="KW-0002">3D-structure</keyword>
<keyword id="KW-0025">Alternative splicing</keyword>
<keyword id="KW-0963">Cytoplasm</keyword>
<keyword id="KW-0274">FAD</keyword>
<keyword id="KW-0285">Flavoprotein</keyword>
<keyword id="KW-0560">Oxidoreductase</keyword>
<keyword id="KW-0576">Peroxisome</keyword>
<keyword id="KW-1185">Reference proteome</keyword>
<dbReference type="EC" id="1.5.3.13" evidence="3 4"/>
<dbReference type="EMBL" id="AF226656">
    <property type="protein sequence ID" value="AAN40705.2"/>
    <property type="molecule type" value="mRNA"/>
</dbReference>
<dbReference type="EMBL" id="AK030664">
    <property type="protein sequence ID" value="BAC27070.1"/>
    <property type="molecule type" value="mRNA"/>
</dbReference>
<dbReference type="EMBL" id="BC033913">
    <property type="protein sequence ID" value="AAH33913.1"/>
    <property type="molecule type" value="mRNA"/>
</dbReference>
<dbReference type="EMBL" id="BC082783">
    <property type="protein sequence ID" value="AAH82783.1"/>
    <property type="molecule type" value="mRNA"/>
</dbReference>
<dbReference type="CCDS" id="CCDS21965.1">
    <molecule id="Q8C0L6-1"/>
</dbReference>
<dbReference type="RefSeq" id="NP_722478.2">
    <molecule id="Q8C0L6-1"/>
    <property type="nucleotide sequence ID" value="NM_153783.4"/>
</dbReference>
<dbReference type="PDB" id="5LAE">
    <property type="method" value="X-ray"/>
    <property type="resolution" value="1.85 A"/>
    <property type="chains" value="A=4-450, A=458-504"/>
</dbReference>
<dbReference type="PDB" id="5LFO">
    <property type="method" value="X-ray"/>
    <property type="resolution" value="1.66 A"/>
    <property type="chains" value="A=4-450, A=458-504"/>
</dbReference>
<dbReference type="PDB" id="5LGB">
    <property type="method" value="X-ray"/>
    <property type="resolution" value="1.80 A"/>
    <property type="chains" value="A=4-450, A=458-504"/>
</dbReference>
<dbReference type="PDB" id="5MBX">
    <property type="method" value="X-ray"/>
    <property type="resolution" value="1.40 A"/>
    <property type="chains" value="A=4-504"/>
</dbReference>
<dbReference type="PDBsum" id="5LAE"/>
<dbReference type="PDBsum" id="5LFO"/>
<dbReference type="PDBsum" id="5LGB"/>
<dbReference type="PDBsum" id="5MBX"/>
<dbReference type="SMR" id="Q8C0L6"/>
<dbReference type="FunCoup" id="Q8C0L6">
    <property type="interactions" value="549"/>
</dbReference>
<dbReference type="STRING" id="10090.ENSMUSP00000026537"/>
<dbReference type="BindingDB" id="Q8C0L6"/>
<dbReference type="ChEMBL" id="CHEMBL3408"/>
<dbReference type="iPTMnet" id="Q8C0L6"/>
<dbReference type="PhosphoSitePlus" id="Q8C0L6"/>
<dbReference type="jPOST" id="Q8C0L6"/>
<dbReference type="PaxDb" id="10090-ENSMUSP00000026537"/>
<dbReference type="PeptideAtlas" id="Q8C0L6"/>
<dbReference type="ProteomicsDB" id="288053">
    <molecule id="Q8C0L6-1"/>
</dbReference>
<dbReference type="ProteomicsDB" id="288054">
    <molecule id="Q8C0L6-2"/>
</dbReference>
<dbReference type="Pumba" id="Q8C0L6"/>
<dbReference type="DNASU" id="212503"/>
<dbReference type="Ensembl" id="ENSMUST00000026537.13">
    <molecule id="Q8C0L6-1"/>
    <property type="protein sequence ID" value="ENSMUSP00000026537.6"/>
    <property type="gene ID" value="ENSMUSG00000025464.16"/>
</dbReference>
<dbReference type="GeneID" id="212503"/>
<dbReference type="KEGG" id="mmu:212503"/>
<dbReference type="UCSC" id="uc009kha.1">
    <molecule id="Q8C0L6-2"/>
    <property type="organism name" value="mouse"/>
</dbReference>
<dbReference type="UCSC" id="uc009khb.1">
    <molecule id="Q8C0L6-1"/>
    <property type="organism name" value="mouse"/>
</dbReference>
<dbReference type="AGR" id="MGI:1916983"/>
<dbReference type="CTD" id="196743"/>
<dbReference type="MGI" id="MGI:1916983">
    <property type="gene designation" value="Paox"/>
</dbReference>
<dbReference type="VEuPathDB" id="HostDB:ENSMUSG00000025464"/>
<dbReference type="eggNOG" id="KOG0685">
    <property type="taxonomic scope" value="Eukaryota"/>
</dbReference>
<dbReference type="GeneTree" id="ENSGT00940000158274"/>
<dbReference type="HOGENOM" id="CLU_004498_2_3_1"/>
<dbReference type="InParanoid" id="Q8C0L6"/>
<dbReference type="OMA" id="DVGCGWL"/>
<dbReference type="OrthoDB" id="2019015at2759"/>
<dbReference type="PhylomeDB" id="Q8C0L6"/>
<dbReference type="TreeFam" id="TF318348"/>
<dbReference type="BioCyc" id="MetaCyc:MONOMER-14466"/>
<dbReference type="BRENDA" id="1.5.3.13">
    <property type="organism ID" value="3474"/>
</dbReference>
<dbReference type="Reactome" id="R-MMU-141334">
    <property type="pathway name" value="PAOs oxidise polyamines to amines"/>
</dbReference>
<dbReference type="Reactome" id="R-MMU-351200">
    <property type="pathway name" value="Interconversion of polyamines"/>
</dbReference>
<dbReference type="Reactome" id="R-MMU-9033241">
    <property type="pathway name" value="Peroxisomal protein import"/>
</dbReference>
<dbReference type="SABIO-RK" id="Q8C0L6"/>
<dbReference type="UniPathway" id="UPA00826"/>
<dbReference type="BioGRID-ORCS" id="212503">
    <property type="hits" value="3 hits in 78 CRISPR screens"/>
</dbReference>
<dbReference type="ChiTaRS" id="Paox">
    <property type="organism name" value="mouse"/>
</dbReference>
<dbReference type="PRO" id="PR:Q8C0L6"/>
<dbReference type="Proteomes" id="UP000000589">
    <property type="component" value="Chromosome 7"/>
</dbReference>
<dbReference type="RNAct" id="Q8C0L6">
    <property type="molecule type" value="protein"/>
</dbReference>
<dbReference type="Bgee" id="ENSMUSG00000025464">
    <property type="expression patterns" value="Expressed in liver and 77 other cell types or tissues"/>
</dbReference>
<dbReference type="ExpressionAtlas" id="Q8C0L6">
    <property type="expression patterns" value="baseline and differential"/>
</dbReference>
<dbReference type="GO" id="GO:0005782">
    <property type="term" value="C:peroxisomal matrix"/>
    <property type="evidence" value="ECO:0007669"/>
    <property type="project" value="Ensembl"/>
</dbReference>
<dbReference type="GO" id="GO:0052903">
    <property type="term" value="F:N(1)-acetylpolyamine oxidase (3-acetamidopropanal-forming) activity"/>
    <property type="evidence" value="ECO:0007669"/>
    <property type="project" value="UniProtKB-EC"/>
</dbReference>
<dbReference type="GO" id="GO:0046592">
    <property type="term" value="F:polyamine oxidase activity"/>
    <property type="evidence" value="ECO:0000314"/>
    <property type="project" value="MGI"/>
</dbReference>
<dbReference type="GO" id="GO:0006598">
    <property type="term" value="P:polyamine catabolic process"/>
    <property type="evidence" value="ECO:0000314"/>
    <property type="project" value="MGI"/>
</dbReference>
<dbReference type="GO" id="GO:1901307">
    <property type="term" value="P:positive regulation of spermidine biosynthetic process"/>
    <property type="evidence" value="ECO:0007669"/>
    <property type="project" value="Ensembl"/>
</dbReference>
<dbReference type="GO" id="GO:0009446">
    <property type="term" value="P:putrescine biosynthetic process"/>
    <property type="evidence" value="ECO:0007669"/>
    <property type="project" value="Ensembl"/>
</dbReference>
<dbReference type="GO" id="GO:0009447">
    <property type="term" value="P:putrescine catabolic process"/>
    <property type="evidence" value="ECO:0007669"/>
    <property type="project" value="Ensembl"/>
</dbReference>
<dbReference type="GO" id="GO:0046203">
    <property type="term" value="P:spermidine catabolic process"/>
    <property type="evidence" value="ECO:0007669"/>
    <property type="project" value="Ensembl"/>
</dbReference>
<dbReference type="GO" id="GO:0046208">
    <property type="term" value="P:spermine catabolic process"/>
    <property type="evidence" value="ECO:0007669"/>
    <property type="project" value="Ensembl"/>
</dbReference>
<dbReference type="Gene3D" id="3.90.660.10">
    <property type="match status" value="1"/>
</dbReference>
<dbReference type="Gene3D" id="3.50.50.60">
    <property type="entry name" value="FAD/NAD(P)-binding domain"/>
    <property type="match status" value="1"/>
</dbReference>
<dbReference type="InterPro" id="IPR002937">
    <property type="entry name" value="Amino_oxidase"/>
</dbReference>
<dbReference type="InterPro" id="IPR036188">
    <property type="entry name" value="FAD/NAD-bd_sf"/>
</dbReference>
<dbReference type="InterPro" id="IPR050281">
    <property type="entry name" value="Flavin_monoamine_oxidase"/>
</dbReference>
<dbReference type="PANTHER" id="PTHR10742">
    <property type="entry name" value="FLAVIN MONOAMINE OXIDASE"/>
    <property type="match status" value="1"/>
</dbReference>
<dbReference type="PANTHER" id="PTHR10742:SF405">
    <property type="entry name" value="PEROXISOMAL N(1)-ACETYL-SPERMINE_SPERMIDINE OXIDASE"/>
    <property type="match status" value="1"/>
</dbReference>
<dbReference type="Pfam" id="PF01593">
    <property type="entry name" value="Amino_oxidase"/>
    <property type="match status" value="1"/>
</dbReference>
<dbReference type="SUPFAM" id="SSF54373">
    <property type="entry name" value="FAD-linked reductases, C-terminal domain"/>
    <property type="match status" value="1"/>
</dbReference>
<dbReference type="SUPFAM" id="SSF51905">
    <property type="entry name" value="FAD/NAD(P)-binding domain"/>
    <property type="match status" value="1"/>
</dbReference>
<organism>
    <name type="scientific">Mus musculus</name>
    <name type="common">Mouse</name>
    <dbReference type="NCBI Taxonomy" id="10090"/>
    <lineage>
        <taxon>Eukaryota</taxon>
        <taxon>Metazoa</taxon>
        <taxon>Chordata</taxon>
        <taxon>Craniata</taxon>
        <taxon>Vertebrata</taxon>
        <taxon>Euteleostomi</taxon>
        <taxon>Mammalia</taxon>
        <taxon>Eutheria</taxon>
        <taxon>Euarchontoglires</taxon>
        <taxon>Glires</taxon>
        <taxon>Rodentia</taxon>
        <taxon>Myomorpha</taxon>
        <taxon>Muroidea</taxon>
        <taxon>Muridae</taxon>
        <taxon>Murinae</taxon>
        <taxon>Mus</taxon>
        <taxon>Mus</taxon>
    </lineage>
</organism>
<evidence type="ECO:0000250" key="1"/>
<evidence type="ECO:0000255" key="2"/>
<evidence type="ECO:0000269" key="3">
    <source>
    </source>
</evidence>
<evidence type="ECO:0000269" key="4">
    <source>
    </source>
</evidence>
<evidence type="ECO:0000303" key="5">
    <source>
    </source>
</evidence>
<evidence type="ECO:0000305" key="6"/>
<evidence type="ECO:0007744" key="7">
    <source>
        <dbReference type="PDB" id="5LAE"/>
    </source>
</evidence>
<evidence type="ECO:0007744" key="8">
    <source>
        <dbReference type="PDB" id="5LFO"/>
    </source>
</evidence>
<evidence type="ECO:0007744" key="9">
    <source>
        <dbReference type="PDB" id="5LGB"/>
    </source>
</evidence>
<evidence type="ECO:0007744" key="10">
    <source>
        <dbReference type="PDB" id="5MBX"/>
    </source>
</evidence>
<evidence type="ECO:0007829" key="11">
    <source>
        <dbReference type="PDB" id="5LAE"/>
    </source>
</evidence>
<evidence type="ECO:0007829" key="12">
    <source>
        <dbReference type="PDB" id="5LFO"/>
    </source>
</evidence>
<evidence type="ECO:0007829" key="13">
    <source>
        <dbReference type="PDB" id="5MBX"/>
    </source>
</evidence>
<sequence length="504" mass="55447">MAFPGPRVLVVGSGIAGLGAAQKLCSHRAAPHLRVLEATASAGGRIRSERCFGGVVELGAHWIHGPSQDNPVFQLAAEFGLLGEKELSEENQLVDTGGHVALPSMIWSSSGTSVSLELMTEMARLFYGLIERTREFLNESETPMASVGEFLKKEISQQVASWTEDDEDTRKRKLAILNTFFNIECCVSGTHSMDLVALAPFGEYTVLPGLDCILAGGYQGLTDRILASLPKDTVAFDKPVKTIHWNGSFQEAAFPGETFPVLVECEDGARLPAHHVIVTVPLGFLKEHQDTFFEPPLPAKKAEAIKKLGFGTNNKIFLEFEEPFWEPDCQFIQVVWEDTSPLQDTALSLQDTWFKKLIGFLVQPSFESSHVLCGFIAGLESEFMETLSDEEVLLSLTQVLRRVTGNPQLPAAKSVRRSQWHSAPYTRGSYSYVAVGSTGDDLDLMAQPLPEDGTGTQLQVLFAGEATHRTFYSTTHGALLSGWREADRLVSLWDSQVEQSRPRL</sequence>